<comment type="function">
    <text>May act as a neurotransmitter or neuromodulator.</text>
</comment>
<comment type="subcellular location">
    <subcellularLocation>
        <location>Secreted</location>
    </subcellularLocation>
</comment>
<comment type="similarity">
    <text evidence="2">Belongs to the allatostatin family.</text>
</comment>
<feature type="peptide" id="PRO_0000043466" description="Carcinustatin-11">
    <location>
        <begin position="1"/>
        <end position="9"/>
    </location>
</feature>
<feature type="modified residue" description="Leucine amide" evidence="1">
    <location>
        <position position="9"/>
    </location>
</feature>
<dbReference type="GO" id="GO:0005576">
    <property type="term" value="C:extracellular region"/>
    <property type="evidence" value="ECO:0007669"/>
    <property type="project" value="UniProtKB-SubCell"/>
</dbReference>
<dbReference type="GO" id="GO:0007218">
    <property type="term" value="P:neuropeptide signaling pathway"/>
    <property type="evidence" value="ECO:0007669"/>
    <property type="project" value="UniProtKB-KW"/>
</dbReference>
<reference key="1">
    <citation type="journal article" date="1997" name="Eur. J. Biochem.">
        <title>Isolation and identification of multiple neuropeptides of the allatostatin superfamily in the shore crab Carcinus maenas.</title>
        <authorList>
            <person name="Duve H."/>
            <person name="Johnsen A.H."/>
            <person name="Maestro J.-L."/>
            <person name="Scott A.G."/>
            <person name="Jaros P.P."/>
            <person name="Thorpe A."/>
        </authorList>
    </citation>
    <scope>PROTEIN SEQUENCE</scope>
    <scope>AMIDATION AT LEU-9</scope>
    <source>
        <tissue>Cerebral ganglion</tissue>
        <tissue>Thoracic ganglion</tissue>
    </source>
</reference>
<organism>
    <name type="scientific">Carcinus maenas</name>
    <name type="common">Common shore crab</name>
    <name type="synonym">Green crab</name>
    <dbReference type="NCBI Taxonomy" id="6759"/>
    <lineage>
        <taxon>Eukaryota</taxon>
        <taxon>Metazoa</taxon>
        <taxon>Ecdysozoa</taxon>
        <taxon>Arthropoda</taxon>
        <taxon>Crustacea</taxon>
        <taxon>Multicrustacea</taxon>
        <taxon>Malacostraca</taxon>
        <taxon>Eumalacostraca</taxon>
        <taxon>Eucarida</taxon>
        <taxon>Decapoda</taxon>
        <taxon>Pleocyemata</taxon>
        <taxon>Brachyura</taxon>
        <taxon>Eubrachyura</taxon>
        <taxon>Portunoidea</taxon>
        <taxon>Carcinidae</taxon>
        <taxon>Carcinus</taxon>
    </lineage>
</organism>
<proteinExistence type="evidence at protein level"/>
<sequence>ATGQYAFGL</sequence>
<keyword id="KW-0027">Amidation</keyword>
<keyword id="KW-0903">Direct protein sequencing</keyword>
<keyword id="KW-0527">Neuropeptide</keyword>
<keyword id="KW-0964">Secreted</keyword>
<accession>P81814</accession>
<name>ALL11_CARMA</name>
<evidence type="ECO:0000269" key="1">
    <source>
    </source>
</evidence>
<evidence type="ECO:0000305" key="2"/>
<protein>
    <recommendedName>
        <fullName>Carcinustatin-11</fullName>
    </recommendedName>
</protein>